<keyword id="KW-0342">GTP-binding</keyword>
<keyword id="KW-0547">Nucleotide-binding</keyword>
<keyword id="KW-1185">Reference proteome</keyword>
<comment type="similarity">
    <text evidence="1">Belongs to the TRAFAC class OBG-HflX-like GTPase superfamily. OBG GTPase family. NOG subfamily.</text>
</comment>
<dbReference type="EMBL" id="L77117">
    <property type="protein sequence ID" value="AAB99416.1"/>
    <property type="molecule type" value="Genomic_DNA"/>
</dbReference>
<dbReference type="RefSeq" id="WP_010870925.1">
    <property type="nucleotide sequence ID" value="NC_000909.1"/>
</dbReference>
<dbReference type="SMR" id="Q58803"/>
<dbReference type="FunCoup" id="Q58803">
    <property type="interactions" value="56"/>
</dbReference>
<dbReference type="STRING" id="243232.MJ_1408"/>
<dbReference type="PaxDb" id="243232-MJ_1408"/>
<dbReference type="EnsemblBacteria" id="AAB99416">
    <property type="protein sequence ID" value="AAB99416"/>
    <property type="gene ID" value="MJ_1408"/>
</dbReference>
<dbReference type="GeneID" id="1452311"/>
<dbReference type="KEGG" id="mja:MJ_1408"/>
<dbReference type="eggNOG" id="arCOG00352">
    <property type="taxonomic scope" value="Archaea"/>
</dbReference>
<dbReference type="HOGENOM" id="CLU_011784_0_0_2"/>
<dbReference type="InParanoid" id="Q58803"/>
<dbReference type="OrthoDB" id="147673at2157"/>
<dbReference type="PhylomeDB" id="Q58803"/>
<dbReference type="Proteomes" id="UP000000805">
    <property type="component" value="Chromosome"/>
</dbReference>
<dbReference type="GO" id="GO:0005525">
    <property type="term" value="F:GTP binding"/>
    <property type="evidence" value="ECO:0000318"/>
    <property type="project" value="GO_Central"/>
</dbReference>
<dbReference type="GO" id="GO:0003924">
    <property type="term" value="F:GTPase activity"/>
    <property type="evidence" value="ECO:0000318"/>
    <property type="project" value="GO_Central"/>
</dbReference>
<dbReference type="CDD" id="cd01897">
    <property type="entry name" value="NOG"/>
    <property type="match status" value="1"/>
</dbReference>
<dbReference type="Gene3D" id="1.20.120.1190">
    <property type="match status" value="1"/>
</dbReference>
<dbReference type="Gene3D" id="3.40.50.300">
    <property type="entry name" value="P-loop containing nucleotide triphosphate hydrolases"/>
    <property type="match status" value="1"/>
</dbReference>
<dbReference type="InterPro" id="IPR031167">
    <property type="entry name" value="G_OBG"/>
</dbReference>
<dbReference type="InterPro" id="IPR006073">
    <property type="entry name" value="GTP-bd"/>
</dbReference>
<dbReference type="InterPro" id="IPR041623">
    <property type="entry name" value="NOG1_N"/>
</dbReference>
<dbReference type="InterPro" id="IPR010674">
    <property type="entry name" value="NOG1_Rossman_fold_dom"/>
</dbReference>
<dbReference type="InterPro" id="IPR027417">
    <property type="entry name" value="P-loop_NTPase"/>
</dbReference>
<dbReference type="InterPro" id="IPR005225">
    <property type="entry name" value="Small_GTP-bd"/>
</dbReference>
<dbReference type="NCBIfam" id="TIGR00231">
    <property type="entry name" value="small_GTP"/>
    <property type="match status" value="1"/>
</dbReference>
<dbReference type="PANTHER" id="PTHR45759">
    <property type="entry name" value="NUCLEOLAR GTP-BINDING PROTEIN 1"/>
    <property type="match status" value="1"/>
</dbReference>
<dbReference type="Pfam" id="PF06858">
    <property type="entry name" value="NOG1"/>
    <property type="match status" value="1"/>
</dbReference>
<dbReference type="Pfam" id="PF17835">
    <property type="entry name" value="NOG1_N"/>
    <property type="match status" value="1"/>
</dbReference>
<dbReference type="PRINTS" id="PR00326">
    <property type="entry name" value="GTP1OBG"/>
</dbReference>
<dbReference type="SUPFAM" id="SSF52540">
    <property type="entry name" value="P-loop containing nucleoside triphosphate hydrolases"/>
    <property type="match status" value="1"/>
</dbReference>
<dbReference type="PROSITE" id="PS51710">
    <property type="entry name" value="G_OBG"/>
    <property type="match status" value="1"/>
</dbReference>
<feature type="chain" id="PRO_0000195036" description="Uncharacterized protein MJ1408">
    <location>
        <begin position="1"/>
        <end position="350"/>
    </location>
</feature>
<feature type="domain" description="OBG-type G" evidence="1">
    <location>
        <begin position="171"/>
        <end position="334"/>
    </location>
</feature>
<feature type="binding site" evidence="1">
    <location>
        <begin position="177"/>
        <end position="184"/>
    </location>
    <ligand>
        <name>GTP</name>
        <dbReference type="ChEBI" id="CHEBI:37565"/>
    </ligand>
</feature>
<feature type="binding site" evidence="1">
    <location>
        <begin position="219"/>
        <end position="223"/>
    </location>
    <ligand>
        <name>GTP</name>
        <dbReference type="ChEBI" id="CHEBI:37565"/>
    </ligand>
</feature>
<feature type="binding site" evidence="1">
    <location>
        <begin position="286"/>
        <end position="289"/>
    </location>
    <ligand>
        <name>GTP</name>
        <dbReference type="ChEBI" id="CHEBI:37565"/>
    </ligand>
</feature>
<proteinExistence type="inferred from homology"/>
<evidence type="ECO:0000255" key="1">
    <source>
        <dbReference type="PROSITE-ProRule" id="PRU01047"/>
    </source>
</evidence>
<sequence>MSREANPFKKMPTILMPDELMAKALRRGEKVANEMRQKELPWLLKARFVEEHKVRTIASVVADNLQKVIDKTPPVRKLPKFYQEMVEVLVGIDDFKKSMGAFKWASELVRKLGNEYARKIRKARTPQQAGKLRKEFVGRVKSILEQIHPEMAFVAVAREKLKDLPTFKDLPTVVIAGYPNVGKSTLLKKLTGADVEINSYPFTTKGINVGYIGEIQMVDTPGLLDRPLYERNDIELQAILALNYLANLILFIIDASEFCGYTIEEQINLLKEIKDLFKAPIVVAINKIDLVDEERVKEIEEKLKEVGIEEILKISADKDIGLDELKERLKKIAIKEFLKDKDAENKELEC</sequence>
<gene>
    <name type="ordered locus">MJ1408</name>
</gene>
<reference key="1">
    <citation type="journal article" date="1996" name="Science">
        <title>Complete genome sequence of the methanogenic archaeon, Methanococcus jannaschii.</title>
        <authorList>
            <person name="Bult C.J."/>
            <person name="White O."/>
            <person name="Olsen G.J."/>
            <person name="Zhou L."/>
            <person name="Fleischmann R.D."/>
            <person name="Sutton G.G."/>
            <person name="Blake J.A."/>
            <person name="FitzGerald L.M."/>
            <person name="Clayton R.A."/>
            <person name="Gocayne J.D."/>
            <person name="Kerlavage A.R."/>
            <person name="Dougherty B.A."/>
            <person name="Tomb J.-F."/>
            <person name="Adams M.D."/>
            <person name="Reich C.I."/>
            <person name="Overbeek R."/>
            <person name="Kirkness E.F."/>
            <person name="Weinstock K.G."/>
            <person name="Merrick J.M."/>
            <person name="Glodek A."/>
            <person name="Scott J.L."/>
            <person name="Geoghagen N.S.M."/>
            <person name="Weidman J.F."/>
            <person name="Fuhrmann J.L."/>
            <person name="Nguyen D."/>
            <person name="Utterback T.R."/>
            <person name="Kelley J.M."/>
            <person name="Peterson J.D."/>
            <person name="Sadow P.W."/>
            <person name="Hanna M.C."/>
            <person name="Cotton M.D."/>
            <person name="Roberts K.M."/>
            <person name="Hurst M.A."/>
            <person name="Kaine B.P."/>
            <person name="Borodovsky M."/>
            <person name="Klenk H.-P."/>
            <person name="Fraser C.M."/>
            <person name="Smith H.O."/>
            <person name="Woese C.R."/>
            <person name="Venter J.C."/>
        </authorList>
    </citation>
    <scope>NUCLEOTIDE SEQUENCE [LARGE SCALE GENOMIC DNA]</scope>
    <source>
        <strain>ATCC 43067 / DSM 2661 / JAL-1 / JCM 10045 / NBRC 100440</strain>
    </source>
</reference>
<protein>
    <recommendedName>
        <fullName>Uncharacterized protein MJ1408</fullName>
    </recommendedName>
</protein>
<organism>
    <name type="scientific">Methanocaldococcus jannaschii (strain ATCC 43067 / DSM 2661 / JAL-1 / JCM 10045 / NBRC 100440)</name>
    <name type="common">Methanococcus jannaschii</name>
    <dbReference type="NCBI Taxonomy" id="243232"/>
    <lineage>
        <taxon>Archaea</taxon>
        <taxon>Methanobacteriati</taxon>
        <taxon>Methanobacteriota</taxon>
        <taxon>Methanomada group</taxon>
        <taxon>Methanococci</taxon>
        <taxon>Methanococcales</taxon>
        <taxon>Methanocaldococcaceae</taxon>
        <taxon>Methanocaldococcus</taxon>
    </lineage>
</organism>
<name>Y1408_METJA</name>
<accession>Q58803</accession>